<gene>
    <name type="primary">CYP72A11</name>
    <name type="ordered locus">At3g14650</name>
    <name type="ORF">MIE1.15</name>
</gene>
<name>C7A11_ARATH</name>
<protein>
    <recommendedName>
        <fullName>Cytochrome P450 72A11</fullName>
        <ecNumber>1.14.-.-</ecNumber>
    </recommendedName>
</protein>
<organism>
    <name type="scientific">Arabidopsis thaliana</name>
    <name type="common">Mouse-ear cress</name>
    <dbReference type="NCBI Taxonomy" id="3702"/>
    <lineage>
        <taxon>Eukaryota</taxon>
        <taxon>Viridiplantae</taxon>
        <taxon>Streptophyta</taxon>
        <taxon>Embryophyta</taxon>
        <taxon>Tracheophyta</taxon>
        <taxon>Spermatophyta</taxon>
        <taxon>Magnoliopsida</taxon>
        <taxon>eudicotyledons</taxon>
        <taxon>Gunneridae</taxon>
        <taxon>Pentapetalae</taxon>
        <taxon>rosids</taxon>
        <taxon>malvids</taxon>
        <taxon>Brassicales</taxon>
        <taxon>Brassicaceae</taxon>
        <taxon>Camelineae</taxon>
        <taxon>Arabidopsis</taxon>
    </lineage>
</organism>
<evidence type="ECO:0000250" key="1"/>
<evidence type="ECO:0000255" key="2"/>
<evidence type="ECO:0000305" key="3"/>
<dbReference type="EC" id="1.14.-.-"/>
<dbReference type="EMBL" id="AB023038">
    <property type="protein sequence ID" value="BAB02397.1"/>
    <property type="molecule type" value="Genomic_DNA"/>
</dbReference>
<dbReference type="EMBL" id="CP002686">
    <property type="protein sequence ID" value="AEE75551.1"/>
    <property type="molecule type" value="Genomic_DNA"/>
</dbReference>
<dbReference type="EMBL" id="AK228721">
    <property type="protein sequence ID" value="BAF00623.1"/>
    <property type="molecule type" value="mRNA"/>
</dbReference>
<dbReference type="RefSeq" id="NP_188083.1">
    <property type="nucleotide sequence ID" value="NM_112326.4"/>
</dbReference>
<dbReference type="SMR" id="Q9LUC9"/>
<dbReference type="FunCoup" id="Q9LUC9">
    <property type="interactions" value="549"/>
</dbReference>
<dbReference type="IntAct" id="Q9LUC9">
    <property type="interactions" value="1"/>
</dbReference>
<dbReference type="STRING" id="3702.Q9LUC9"/>
<dbReference type="iPTMnet" id="Q9LUC9"/>
<dbReference type="PaxDb" id="3702-AT3G14650.1"/>
<dbReference type="ProteomicsDB" id="240534"/>
<dbReference type="EnsemblPlants" id="AT3G14650.1">
    <property type="protein sequence ID" value="AT3G14650.1"/>
    <property type="gene ID" value="AT3G14650"/>
</dbReference>
<dbReference type="GeneID" id="820693"/>
<dbReference type="Gramene" id="AT3G14650.1">
    <property type="protein sequence ID" value="AT3G14650.1"/>
    <property type="gene ID" value="AT3G14650"/>
</dbReference>
<dbReference type="KEGG" id="ath:AT3G14650"/>
<dbReference type="Araport" id="AT3G14650"/>
<dbReference type="TAIR" id="AT3G14650">
    <property type="gene designation" value="CYP72A11"/>
</dbReference>
<dbReference type="eggNOG" id="KOG0157">
    <property type="taxonomic scope" value="Eukaryota"/>
</dbReference>
<dbReference type="HOGENOM" id="CLU_001570_5_0_1"/>
<dbReference type="InParanoid" id="Q9LUC9"/>
<dbReference type="OMA" id="WGSEVHE"/>
<dbReference type="PhylomeDB" id="Q9LUC9"/>
<dbReference type="BioCyc" id="ARA:AT3G14650-MONOMER"/>
<dbReference type="PRO" id="PR:Q9LUC9"/>
<dbReference type="Proteomes" id="UP000006548">
    <property type="component" value="Chromosome 3"/>
</dbReference>
<dbReference type="ExpressionAtlas" id="Q9LUC9">
    <property type="expression patterns" value="baseline and differential"/>
</dbReference>
<dbReference type="GO" id="GO:0016020">
    <property type="term" value="C:membrane"/>
    <property type="evidence" value="ECO:0007669"/>
    <property type="project" value="UniProtKB-SubCell"/>
</dbReference>
<dbReference type="GO" id="GO:0020037">
    <property type="term" value="F:heme binding"/>
    <property type="evidence" value="ECO:0007669"/>
    <property type="project" value="InterPro"/>
</dbReference>
<dbReference type="GO" id="GO:0005506">
    <property type="term" value="F:iron ion binding"/>
    <property type="evidence" value="ECO:0007669"/>
    <property type="project" value="InterPro"/>
</dbReference>
<dbReference type="GO" id="GO:0004497">
    <property type="term" value="F:monooxygenase activity"/>
    <property type="evidence" value="ECO:0007669"/>
    <property type="project" value="UniProtKB-KW"/>
</dbReference>
<dbReference type="GO" id="GO:0016705">
    <property type="term" value="F:oxidoreductase activity, acting on paired donors, with incorporation or reduction of molecular oxygen"/>
    <property type="evidence" value="ECO:0007669"/>
    <property type="project" value="InterPro"/>
</dbReference>
<dbReference type="CDD" id="cd20642">
    <property type="entry name" value="CYP72"/>
    <property type="match status" value="1"/>
</dbReference>
<dbReference type="FunFam" id="1.10.630.10:FF:000029">
    <property type="entry name" value="Cytochrome P450 734A1"/>
    <property type="match status" value="1"/>
</dbReference>
<dbReference type="Gene3D" id="1.10.630.10">
    <property type="entry name" value="Cytochrome P450"/>
    <property type="match status" value="1"/>
</dbReference>
<dbReference type="InterPro" id="IPR001128">
    <property type="entry name" value="Cyt_P450"/>
</dbReference>
<dbReference type="InterPro" id="IPR002401">
    <property type="entry name" value="Cyt_P450_E_grp-I"/>
</dbReference>
<dbReference type="InterPro" id="IPR036396">
    <property type="entry name" value="Cyt_P450_sf"/>
</dbReference>
<dbReference type="InterPro" id="IPR050665">
    <property type="entry name" value="Cytochrome_P450_Monooxygen"/>
</dbReference>
<dbReference type="PANTHER" id="PTHR24282:SF255">
    <property type="entry name" value="CYTOCHROME P450 72A11-RELATED"/>
    <property type="match status" value="1"/>
</dbReference>
<dbReference type="PANTHER" id="PTHR24282">
    <property type="entry name" value="CYTOCHROME P450 FAMILY MEMBER"/>
    <property type="match status" value="1"/>
</dbReference>
<dbReference type="Pfam" id="PF00067">
    <property type="entry name" value="p450"/>
    <property type="match status" value="1"/>
</dbReference>
<dbReference type="PRINTS" id="PR00463">
    <property type="entry name" value="EP450I"/>
</dbReference>
<dbReference type="PRINTS" id="PR00385">
    <property type="entry name" value="P450"/>
</dbReference>
<dbReference type="SUPFAM" id="SSF48264">
    <property type="entry name" value="Cytochrome P450"/>
    <property type="match status" value="1"/>
</dbReference>
<reference key="1">
    <citation type="journal article" date="2000" name="DNA Res.">
        <title>Structural analysis of Arabidopsis thaliana chromosome 3. I. Sequence features of the regions of 4,504,864 bp covered by sixty P1 and TAC clones.</title>
        <authorList>
            <person name="Sato S."/>
            <person name="Nakamura Y."/>
            <person name="Kaneko T."/>
            <person name="Katoh T."/>
            <person name="Asamizu E."/>
            <person name="Tabata S."/>
        </authorList>
    </citation>
    <scope>NUCLEOTIDE SEQUENCE [LARGE SCALE GENOMIC DNA]</scope>
    <source>
        <strain>cv. Columbia</strain>
    </source>
</reference>
<reference key="2">
    <citation type="journal article" date="2017" name="Plant J.">
        <title>Araport11: a complete reannotation of the Arabidopsis thaliana reference genome.</title>
        <authorList>
            <person name="Cheng C.Y."/>
            <person name="Krishnakumar V."/>
            <person name="Chan A.P."/>
            <person name="Thibaud-Nissen F."/>
            <person name="Schobel S."/>
            <person name="Town C.D."/>
        </authorList>
    </citation>
    <scope>GENOME REANNOTATION</scope>
    <source>
        <strain>cv. Columbia</strain>
    </source>
</reference>
<reference key="3">
    <citation type="submission" date="2006-07" db="EMBL/GenBank/DDBJ databases">
        <title>Large-scale analysis of RIKEN Arabidopsis full-length (RAFL) cDNAs.</title>
        <authorList>
            <person name="Totoki Y."/>
            <person name="Seki M."/>
            <person name="Ishida J."/>
            <person name="Nakajima M."/>
            <person name="Enju A."/>
            <person name="Kamiya A."/>
            <person name="Narusaka M."/>
            <person name="Shin-i T."/>
            <person name="Nakagawa M."/>
            <person name="Sakamoto N."/>
            <person name="Oishi K."/>
            <person name="Kohara Y."/>
            <person name="Kobayashi M."/>
            <person name="Toyoda A."/>
            <person name="Sakaki Y."/>
            <person name="Sakurai T."/>
            <person name="Iida K."/>
            <person name="Akiyama K."/>
            <person name="Satou M."/>
            <person name="Toyoda T."/>
            <person name="Konagaya A."/>
            <person name="Carninci P."/>
            <person name="Kawai J."/>
            <person name="Hayashizaki Y."/>
            <person name="Shinozaki K."/>
        </authorList>
    </citation>
    <scope>NUCLEOTIDE SEQUENCE [LARGE SCALE MRNA]</scope>
    <source>
        <strain>cv. Columbia</strain>
    </source>
</reference>
<proteinExistence type="evidence at transcript level"/>
<feature type="chain" id="PRO_0000425855" description="Cytochrome P450 72A11">
    <location>
        <begin position="1"/>
        <end position="512"/>
    </location>
</feature>
<feature type="transmembrane region" description="Helical" evidence="2">
    <location>
        <begin position="2"/>
        <end position="22"/>
    </location>
</feature>
<feature type="binding site" description="axial binding residue" evidence="1">
    <location>
        <position position="460"/>
    </location>
    <ligand>
        <name>heme</name>
        <dbReference type="ChEBI" id="CHEBI:30413"/>
    </ligand>
    <ligandPart>
        <name>Fe</name>
        <dbReference type="ChEBI" id="CHEBI:18248"/>
    </ligandPart>
</feature>
<sequence>MEISVASVTVSVAVVVVSWWVWRTLQWVWFKPKMLESYLRRQGLAGTPYTPLVGDLKKNFSMRAEARSKPINLTDDITPRIVPYPLQMLKTHGRTFFTWFGAIPTITIMDPEQITEVLNKVYDFQKAHTFPLGRLIATGVLSYDGDKWAKHRRIINPAFHLEKIKNMVPAFHQSCSEIVCKWDKLVSDKESSCEVDVWPGLVSMTADVISRTAFGSSCVEGQRIFELQAELAQLIIQTVRKAFIPGYSYLPTKGNRRMKAKAREIQVILRGIVNKRLRAREAGEAPNDDLLGILLESNLGQTKGNGMSTEDLMEECKLFYFVGQETTSVLLVWTMVLLSQHQDWQARAREEVKQVFGDKEPDAEGLNQLKVMTMILYEVLRLYPPIPQLSRAIHKEMELGDLTLPGGVLINLPILLVQRDTELWGNDAGEFKPDRFKDGLSKATKNQASFFPFAWGSRICIGQNFALLEAKMAMALILQRFSFELSPSYVHAPYTVFTIHPQFGAPLIMHKL</sequence>
<comment type="cofactor">
    <cofactor evidence="1">
        <name>heme</name>
        <dbReference type="ChEBI" id="CHEBI:30413"/>
    </cofactor>
</comment>
<comment type="subcellular location">
    <subcellularLocation>
        <location evidence="3">Membrane</location>
        <topology evidence="3">Single-pass membrane protein</topology>
    </subcellularLocation>
</comment>
<comment type="similarity">
    <text evidence="3">Belongs to the cytochrome P450 family.</text>
</comment>
<accession>Q9LUC9</accession>
<keyword id="KW-0349">Heme</keyword>
<keyword id="KW-0408">Iron</keyword>
<keyword id="KW-0472">Membrane</keyword>
<keyword id="KW-0479">Metal-binding</keyword>
<keyword id="KW-0503">Monooxygenase</keyword>
<keyword id="KW-0560">Oxidoreductase</keyword>
<keyword id="KW-1185">Reference proteome</keyword>
<keyword id="KW-0812">Transmembrane</keyword>
<keyword id="KW-1133">Transmembrane helix</keyword>